<protein>
    <recommendedName>
        <fullName evidence="1">ATP synthase subunit a 2</fullName>
    </recommendedName>
    <alternativeName>
        <fullName evidence="1">ATP synthase F0 sector subunit a 2</fullName>
    </alternativeName>
    <alternativeName>
        <fullName evidence="1">F-ATPase subunit 6 2</fullName>
    </alternativeName>
</protein>
<feature type="chain" id="PRO_0000362215" description="ATP synthase subunit a 2">
    <location>
        <begin position="1"/>
        <end position="234"/>
    </location>
</feature>
<feature type="transmembrane region" description="Helical" evidence="1">
    <location>
        <begin position="20"/>
        <end position="40"/>
    </location>
</feature>
<feature type="transmembrane region" description="Helical" evidence="1">
    <location>
        <begin position="78"/>
        <end position="98"/>
    </location>
</feature>
<feature type="transmembrane region" description="Helical" evidence="1">
    <location>
        <begin position="107"/>
        <end position="127"/>
    </location>
</feature>
<feature type="transmembrane region" description="Helical" evidence="1">
    <location>
        <begin position="169"/>
        <end position="189"/>
    </location>
</feature>
<feature type="transmembrane region" description="Helical" evidence="1">
    <location>
        <begin position="194"/>
        <end position="214"/>
    </location>
</feature>
<organism>
    <name type="scientific">Acaryochloris marina (strain MBIC 11017)</name>
    <dbReference type="NCBI Taxonomy" id="329726"/>
    <lineage>
        <taxon>Bacteria</taxon>
        <taxon>Bacillati</taxon>
        <taxon>Cyanobacteriota</taxon>
        <taxon>Cyanophyceae</taxon>
        <taxon>Acaryochloridales</taxon>
        <taxon>Acaryochloridaceae</taxon>
        <taxon>Acaryochloris</taxon>
    </lineage>
</organism>
<accession>A8ZNS1</accession>
<evidence type="ECO:0000255" key="1">
    <source>
        <dbReference type="HAMAP-Rule" id="MF_01393"/>
    </source>
</evidence>
<reference key="1">
    <citation type="journal article" date="2008" name="Proc. Natl. Acad. Sci. U.S.A.">
        <title>Niche adaptation and genome expansion in the chlorophyll d-producing cyanobacterium Acaryochloris marina.</title>
        <authorList>
            <person name="Swingley W.D."/>
            <person name="Chen M."/>
            <person name="Cheung P.C."/>
            <person name="Conrad A.L."/>
            <person name="Dejesa L.C."/>
            <person name="Hao J."/>
            <person name="Honchak B.M."/>
            <person name="Karbach L.E."/>
            <person name="Kurdoglu A."/>
            <person name="Lahiri S."/>
            <person name="Mastrian S.D."/>
            <person name="Miyashita H."/>
            <person name="Page L."/>
            <person name="Ramakrishna P."/>
            <person name="Satoh S."/>
            <person name="Sattley W.M."/>
            <person name="Shimada Y."/>
            <person name="Taylor H.L."/>
            <person name="Tomo T."/>
            <person name="Tsuchiya T."/>
            <person name="Wang Z.T."/>
            <person name="Raymond J."/>
            <person name="Mimuro M."/>
            <person name="Blankenship R.E."/>
            <person name="Touchman J.W."/>
        </authorList>
    </citation>
    <scope>NUCLEOTIDE SEQUENCE [LARGE SCALE GENOMIC DNA]</scope>
    <source>
        <strain>MBIC 11017</strain>
    </source>
</reference>
<name>ATP62_ACAM1</name>
<dbReference type="EMBL" id="CP000841">
    <property type="protein sequence ID" value="ABW32657.1"/>
    <property type="molecule type" value="Genomic_DNA"/>
</dbReference>
<dbReference type="RefSeq" id="WP_012167718.1">
    <property type="nucleotide sequence ID" value="NC_009929.1"/>
</dbReference>
<dbReference type="SMR" id="A8ZNS1"/>
<dbReference type="KEGG" id="amr:AM1_D0162"/>
<dbReference type="HOGENOM" id="CLU_041018_2_5_3"/>
<dbReference type="OrthoDB" id="9789241at2"/>
<dbReference type="Proteomes" id="UP000000268">
    <property type="component" value="Plasmid pREB4"/>
</dbReference>
<dbReference type="GO" id="GO:0031676">
    <property type="term" value="C:plasma membrane-derived thylakoid membrane"/>
    <property type="evidence" value="ECO:0007669"/>
    <property type="project" value="UniProtKB-SubCell"/>
</dbReference>
<dbReference type="GO" id="GO:0045259">
    <property type="term" value="C:proton-transporting ATP synthase complex"/>
    <property type="evidence" value="ECO:0007669"/>
    <property type="project" value="UniProtKB-KW"/>
</dbReference>
<dbReference type="GO" id="GO:0046933">
    <property type="term" value="F:proton-transporting ATP synthase activity, rotational mechanism"/>
    <property type="evidence" value="ECO:0007669"/>
    <property type="project" value="UniProtKB-UniRule"/>
</dbReference>
<dbReference type="GO" id="GO:0042777">
    <property type="term" value="P:proton motive force-driven plasma membrane ATP synthesis"/>
    <property type="evidence" value="ECO:0007669"/>
    <property type="project" value="TreeGrafter"/>
</dbReference>
<dbReference type="CDD" id="cd00310">
    <property type="entry name" value="ATP-synt_Fo_a_6"/>
    <property type="match status" value="1"/>
</dbReference>
<dbReference type="Gene3D" id="1.20.120.220">
    <property type="entry name" value="ATP synthase, F0 complex, subunit A"/>
    <property type="match status" value="1"/>
</dbReference>
<dbReference type="HAMAP" id="MF_01393">
    <property type="entry name" value="ATP_synth_a_bact"/>
    <property type="match status" value="1"/>
</dbReference>
<dbReference type="InterPro" id="IPR017692">
    <property type="entry name" value="Alt_ATP_synth_F0_Asu"/>
</dbReference>
<dbReference type="InterPro" id="IPR045082">
    <property type="entry name" value="ATP_syn_F0_a_bact/chloroplast"/>
</dbReference>
<dbReference type="InterPro" id="IPR000568">
    <property type="entry name" value="ATP_synth_F0_asu"/>
</dbReference>
<dbReference type="InterPro" id="IPR023011">
    <property type="entry name" value="ATP_synth_F0_asu_AS"/>
</dbReference>
<dbReference type="InterPro" id="IPR035908">
    <property type="entry name" value="F0_ATP_A_sf"/>
</dbReference>
<dbReference type="NCBIfam" id="TIGR03306">
    <property type="entry name" value="altF1_A"/>
    <property type="match status" value="1"/>
</dbReference>
<dbReference type="NCBIfam" id="TIGR01131">
    <property type="entry name" value="ATP_synt_6_or_A"/>
    <property type="match status" value="1"/>
</dbReference>
<dbReference type="NCBIfam" id="NF004481">
    <property type="entry name" value="PRK05815.2-3"/>
    <property type="match status" value="1"/>
</dbReference>
<dbReference type="PANTHER" id="PTHR42823">
    <property type="entry name" value="ATP SYNTHASE SUBUNIT A, CHLOROPLASTIC"/>
    <property type="match status" value="1"/>
</dbReference>
<dbReference type="PANTHER" id="PTHR42823:SF3">
    <property type="entry name" value="ATP SYNTHASE SUBUNIT A, CHLOROPLASTIC"/>
    <property type="match status" value="1"/>
</dbReference>
<dbReference type="Pfam" id="PF00119">
    <property type="entry name" value="ATP-synt_A"/>
    <property type="match status" value="1"/>
</dbReference>
<dbReference type="PRINTS" id="PR00123">
    <property type="entry name" value="ATPASEA"/>
</dbReference>
<dbReference type="SUPFAM" id="SSF81336">
    <property type="entry name" value="F1F0 ATP synthase subunit A"/>
    <property type="match status" value="1"/>
</dbReference>
<dbReference type="PROSITE" id="PS00449">
    <property type="entry name" value="ATPASE_A"/>
    <property type="match status" value="1"/>
</dbReference>
<geneLocation type="plasmid">
    <name>pREB4</name>
</geneLocation>
<sequence length="234" mass="25750">MHLTPDQTIFWQWGLFSLNATLIFTWLVMGVLVVGSWFVTRHLSASTQISRGQNLLEVIVLGIRDQIQEIIDQPADPYLPFIGTLFIFIALSNLLSVIPGYQPPTGSLSTTTALALCVFFAVPLYGVQKKGVRGYLQQYLQPNPIMLPFNIIGDFSRIVALAVRLFGNVMSGTMIVGILLSVAPLFFPVMMQVLGLLTGVIQAYIFAILAMVFIAAASQVDQHNYQTDSEVSHG</sequence>
<comment type="function">
    <text evidence="1">Key component of the proton channel; it plays a direct role in the translocation of protons across the membrane.</text>
</comment>
<comment type="subunit">
    <text evidence="1">F-type ATPases have 2 components, CF(1) - the catalytic core - and CF(0) - the membrane proton channel. CF(1) has five subunits: alpha(3), beta(3), gamma(1), delta(1), epsilon(1). CF(0) has four main subunits: a, b, b' and c.</text>
</comment>
<comment type="subcellular location">
    <subcellularLocation>
        <location evidence="1">Cellular thylakoid membrane</location>
        <topology evidence="1">Multi-pass membrane protein</topology>
    </subcellularLocation>
</comment>
<comment type="similarity">
    <text evidence="1">Belongs to the ATPase A chain family.</text>
</comment>
<gene>
    <name evidence="1" type="primary">atpB2</name>
    <name evidence="1" type="synonym">atpI2</name>
    <name type="ordered locus">AM1_D0162</name>
</gene>
<keyword id="KW-0066">ATP synthesis</keyword>
<keyword id="KW-0138">CF(0)</keyword>
<keyword id="KW-0375">Hydrogen ion transport</keyword>
<keyword id="KW-0406">Ion transport</keyword>
<keyword id="KW-0472">Membrane</keyword>
<keyword id="KW-0614">Plasmid</keyword>
<keyword id="KW-1185">Reference proteome</keyword>
<keyword id="KW-0793">Thylakoid</keyword>
<keyword id="KW-0812">Transmembrane</keyword>
<keyword id="KW-1133">Transmembrane helix</keyword>
<keyword id="KW-0813">Transport</keyword>
<proteinExistence type="inferred from homology"/>